<dbReference type="EC" id="5.6.2.2" evidence="1"/>
<dbReference type="EMBL" id="U83664">
    <property type="protein sequence ID" value="AAD09234.1"/>
    <property type="molecule type" value="Genomic_DNA"/>
</dbReference>
<dbReference type="SMR" id="Q9ZAQ6"/>
<dbReference type="GO" id="GO:0005694">
    <property type="term" value="C:chromosome"/>
    <property type="evidence" value="ECO:0007669"/>
    <property type="project" value="InterPro"/>
</dbReference>
<dbReference type="GO" id="GO:0005737">
    <property type="term" value="C:cytoplasm"/>
    <property type="evidence" value="ECO:0007669"/>
    <property type="project" value="UniProtKB-SubCell"/>
</dbReference>
<dbReference type="GO" id="GO:0005524">
    <property type="term" value="F:ATP binding"/>
    <property type="evidence" value="ECO:0007669"/>
    <property type="project" value="UniProtKB-UniRule"/>
</dbReference>
<dbReference type="GO" id="GO:0003677">
    <property type="term" value="F:DNA binding"/>
    <property type="evidence" value="ECO:0007669"/>
    <property type="project" value="UniProtKB-KW"/>
</dbReference>
<dbReference type="GO" id="GO:0034335">
    <property type="term" value="F:DNA negative supercoiling activity"/>
    <property type="evidence" value="ECO:0007669"/>
    <property type="project" value="UniProtKB-ARBA"/>
</dbReference>
<dbReference type="GO" id="GO:0046872">
    <property type="term" value="F:metal ion binding"/>
    <property type="evidence" value="ECO:0007669"/>
    <property type="project" value="UniProtKB-KW"/>
</dbReference>
<dbReference type="GO" id="GO:0006265">
    <property type="term" value="P:DNA topological change"/>
    <property type="evidence" value="ECO:0007669"/>
    <property type="project" value="UniProtKB-UniRule"/>
</dbReference>
<dbReference type="GO" id="GO:0006261">
    <property type="term" value="P:DNA-templated DNA replication"/>
    <property type="evidence" value="ECO:0007669"/>
    <property type="project" value="UniProtKB-UniRule"/>
</dbReference>
<dbReference type="CDD" id="cd16928">
    <property type="entry name" value="HATPase_GyrB-like"/>
    <property type="match status" value="1"/>
</dbReference>
<dbReference type="CDD" id="cd00822">
    <property type="entry name" value="TopoII_Trans_DNA_gyrase"/>
    <property type="match status" value="1"/>
</dbReference>
<dbReference type="CDD" id="cd03366">
    <property type="entry name" value="TOPRIM_TopoIIA_GyrB"/>
    <property type="match status" value="1"/>
</dbReference>
<dbReference type="FunFam" id="3.30.565.10:FF:000002">
    <property type="entry name" value="DNA gyrase subunit B"/>
    <property type="match status" value="1"/>
</dbReference>
<dbReference type="Gene3D" id="3.30.230.10">
    <property type="match status" value="1"/>
</dbReference>
<dbReference type="Gene3D" id="3.40.50.670">
    <property type="match status" value="1"/>
</dbReference>
<dbReference type="Gene3D" id="3.30.565.10">
    <property type="entry name" value="Histidine kinase-like ATPase, C-terminal domain"/>
    <property type="match status" value="1"/>
</dbReference>
<dbReference type="HAMAP" id="MF_01898">
    <property type="entry name" value="GyrB"/>
    <property type="match status" value="1"/>
</dbReference>
<dbReference type="InterPro" id="IPR002288">
    <property type="entry name" value="DNA_gyrase_B_C"/>
</dbReference>
<dbReference type="InterPro" id="IPR011557">
    <property type="entry name" value="GyrB"/>
</dbReference>
<dbReference type="InterPro" id="IPR036890">
    <property type="entry name" value="HATPase_C_sf"/>
</dbReference>
<dbReference type="InterPro" id="IPR020568">
    <property type="entry name" value="Ribosomal_Su5_D2-typ_SF"/>
</dbReference>
<dbReference type="InterPro" id="IPR014721">
    <property type="entry name" value="Ribsml_uS5_D2-typ_fold_subgr"/>
</dbReference>
<dbReference type="InterPro" id="IPR001241">
    <property type="entry name" value="Topo_IIA"/>
</dbReference>
<dbReference type="InterPro" id="IPR013760">
    <property type="entry name" value="Topo_IIA-like_dom_sf"/>
</dbReference>
<dbReference type="InterPro" id="IPR000565">
    <property type="entry name" value="Topo_IIA_B"/>
</dbReference>
<dbReference type="InterPro" id="IPR013759">
    <property type="entry name" value="Topo_IIA_B_C"/>
</dbReference>
<dbReference type="InterPro" id="IPR013506">
    <property type="entry name" value="Topo_IIA_bsu_dom2"/>
</dbReference>
<dbReference type="InterPro" id="IPR018522">
    <property type="entry name" value="TopoIIA_CS"/>
</dbReference>
<dbReference type="InterPro" id="IPR006171">
    <property type="entry name" value="TOPRIM_dom"/>
</dbReference>
<dbReference type="InterPro" id="IPR034160">
    <property type="entry name" value="TOPRIM_GyrB"/>
</dbReference>
<dbReference type="NCBIfam" id="NF004189">
    <property type="entry name" value="PRK05644.1"/>
    <property type="match status" value="1"/>
</dbReference>
<dbReference type="PANTHER" id="PTHR45866:SF1">
    <property type="entry name" value="DNA GYRASE SUBUNIT B, MITOCHONDRIAL"/>
    <property type="match status" value="1"/>
</dbReference>
<dbReference type="PANTHER" id="PTHR45866">
    <property type="entry name" value="DNA GYRASE/TOPOISOMERASE SUBUNIT B"/>
    <property type="match status" value="1"/>
</dbReference>
<dbReference type="Pfam" id="PF00204">
    <property type="entry name" value="DNA_gyraseB"/>
    <property type="match status" value="1"/>
</dbReference>
<dbReference type="Pfam" id="PF00986">
    <property type="entry name" value="DNA_gyraseB_C"/>
    <property type="match status" value="1"/>
</dbReference>
<dbReference type="Pfam" id="PF02518">
    <property type="entry name" value="HATPase_c"/>
    <property type="match status" value="1"/>
</dbReference>
<dbReference type="Pfam" id="PF01751">
    <property type="entry name" value="Toprim"/>
    <property type="match status" value="1"/>
</dbReference>
<dbReference type="PRINTS" id="PR01159">
    <property type="entry name" value="DNAGYRASEB"/>
</dbReference>
<dbReference type="PRINTS" id="PR00418">
    <property type="entry name" value="TPI2FAMILY"/>
</dbReference>
<dbReference type="SMART" id="SM00387">
    <property type="entry name" value="HATPase_c"/>
    <property type="match status" value="1"/>
</dbReference>
<dbReference type="SMART" id="SM00433">
    <property type="entry name" value="TOP2c"/>
    <property type="match status" value="1"/>
</dbReference>
<dbReference type="SUPFAM" id="SSF55874">
    <property type="entry name" value="ATPase domain of HSP90 chaperone/DNA topoisomerase II/histidine kinase"/>
    <property type="match status" value="1"/>
</dbReference>
<dbReference type="SUPFAM" id="SSF54211">
    <property type="entry name" value="Ribosomal protein S5 domain 2-like"/>
    <property type="match status" value="1"/>
</dbReference>
<dbReference type="SUPFAM" id="SSF56719">
    <property type="entry name" value="Type II DNA topoisomerase"/>
    <property type="match status" value="1"/>
</dbReference>
<dbReference type="PROSITE" id="PS00177">
    <property type="entry name" value="TOPOISOMERASE_II"/>
    <property type="match status" value="1"/>
</dbReference>
<dbReference type="PROSITE" id="PS50880">
    <property type="entry name" value="TOPRIM"/>
    <property type="match status" value="1"/>
</dbReference>
<gene>
    <name evidence="1" type="primary">gyrB</name>
</gene>
<proteinExistence type="inferred from homology"/>
<sequence length="638" mass="71662">MSKQEEISKYGAKNIQFLEGLEAVRKRPGMYIGSIGFRGLHHLIWEIVDNSVDEAMAGFATNIEVKLHPNNEIEVIDNGRGMPVDIHPTTKKSAVETILTVLYAGGKFDSTNYKVSGGLHGVGVSVVNALSDSFEVWVKRGGKFYYQKYINGGHPVKPLEVIGEVNKDETGTRIKFHPDYQIMDKVAFDFGTIIDHAKQIAYLNKGLSISCEDITKNTIRNFCFEGGIIDYVSELNRGKKVIIPDIIYAEGTFRDKTPNAQDVIVNVAIQYNETYTSNIVSYANNIQTGEGGTHEQGFYDALTRIYNKYAEDNKLFKNNNEKISREDTKDGLVAIISIKHTDPIFEGQTKGKLENKDARIATNKIISEQLERYMAENPSHAKAIIEKCLLTQRSRLAANAAREASRKKEGSEFGNLPGKLADCSSKNAEVRELFIVEGNSAGGSAKMGRDRATQAILPLRGKIINAEKQDFTSVMSNKEVSSMIHALGTGITDEFNINKLKYHKIVIMTDADVDGAHIATLLLTFFYRYMRPLIEYGFVYIAQPPLYKISTAKVTEYAYNDAQKEEILSKLEDSKNISIQRYKGLGEMDPEQLWETTMNPATRKYCKFKSMTLLAAIQSFQHWWVKKLNLVMTSFKKC</sequence>
<protein>
    <recommendedName>
        <fullName evidence="1">DNA gyrase subunit B</fullName>
        <ecNumber evidence="1">5.6.2.2</ecNumber>
    </recommendedName>
</protein>
<keyword id="KW-0067">ATP-binding</keyword>
<keyword id="KW-0963">Cytoplasm</keyword>
<keyword id="KW-0238">DNA-binding</keyword>
<keyword id="KW-0413">Isomerase</keyword>
<keyword id="KW-0460">Magnesium</keyword>
<keyword id="KW-0479">Metal-binding</keyword>
<keyword id="KW-0547">Nucleotide-binding</keyword>
<keyword id="KW-0799">Topoisomerase</keyword>
<comment type="function">
    <text evidence="1">A type II topoisomerase that negatively supercoils closed circular double-stranded (ds) DNA in an ATP-dependent manner to modulate DNA topology and maintain chromosomes in an underwound state. Negative supercoiling favors strand separation, and DNA replication, transcription, recombination and repair, all of which involve strand separation. Also able to catalyze the interconversion of other topological isomers of dsDNA rings, including catenanes and knotted rings. Type II topoisomerases break and join 2 DNA strands simultaneously in an ATP-dependent manner.</text>
</comment>
<comment type="catalytic activity">
    <reaction evidence="1">
        <text>ATP-dependent breakage, passage and rejoining of double-stranded DNA.</text>
        <dbReference type="EC" id="5.6.2.2"/>
    </reaction>
</comment>
<comment type="cofactor">
    <cofactor evidence="1">
        <name>Mg(2+)</name>
        <dbReference type="ChEBI" id="CHEBI:18420"/>
    </cofactor>
    <cofactor evidence="1">
        <name>Mn(2+)</name>
        <dbReference type="ChEBI" id="CHEBI:29035"/>
    </cofactor>
    <cofactor evidence="1">
        <name>Ca(2+)</name>
        <dbReference type="ChEBI" id="CHEBI:29108"/>
    </cofactor>
    <text evidence="1">Binds two Mg(2+) per subunit. The magnesium ions form salt bridges with both the protein and the DNA. Can also accept other divalent metal cations, such as Mn(2+) or Ca(2+).</text>
</comment>
<comment type="subunit">
    <text evidence="1">Heterotetramer, composed of two GyrA and two GyrB chains. In the heterotetramer, GyrA contains the active site tyrosine that forms a transient covalent intermediate with DNA, while GyrB binds cofactors and catalyzes ATP hydrolysis.</text>
</comment>
<comment type="subcellular location">
    <subcellularLocation>
        <location evidence="1">Cytoplasm</location>
    </subcellularLocation>
</comment>
<comment type="miscellaneous">
    <text evidence="1">Few gyrases are as efficient as E.coli at forming negative supercoils. Not all organisms have 2 type II topoisomerases; in organisms with a single type II topoisomerase this enzyme also has to decatenate newly replicated chromosomes.</text>
</comment>
<comment type="similarity">
    <text evidence="1">Belongs to the type II topoisomerase GyrB family.</text>
</comment>
<reference key="1">
    <citation type="submission" date="1997-01" db="EMBL/GenBank/DDBJ databases">
        <authorList>
            <person name="Rawadi G."/>
            <person name="Lalioui L."/>
            <person name="Lemercier B."/>
            <person name="Dujeancourt A."/>
            <person name="Roulland-Dussoix D."/>
        </authorList>
    </citation>
    <scope>NUCLEOTIDE SEQUENCE [GENOMIC DNA]</scope>
    <source>
        <strain>MY-5121TR</strain>
    </source>
</reference>
<accession>Q9ZAQ6</accession>
<name>GYRB_METAT</name>
<feature type="chain" id="PRO_0000145316" description="DNA gyrase subunit B">
    <location>
        <begin position="1"/>
        <end position="638"/>
    </location>
</feature>
<feature type="domain" description="Toprim" evidence="1">
    <location>
        <begin position="431"/>
        <end position="545"/>
    </location>
</feature>
<feature type="binding site" evidence="1">
    <location>
        <position position="437"/>
    </location>
    <ligand>
        <name>Mg(2+)</name>
        <dbReference type="ChEBI" id="CHEBI:18420"/>
        <label>1</label>
        <note>catalytic</note>
    </ligand>
</feature>
<feature type="binding site" evidence="1">
    <location>
        <position position="510"/>
    </location>
    <ligand>
        <name>Mg(2+)</name>
        <dbReference type="ChEBI" id="CHEBI:18420"/>
        <label>1</label>
        <note>catalytic</note>
    </ligand>
</feature>
<feature type="binding site" evidence="1">
    <location>
        <position position="510"/>
    </location>
    <ligand>
        <name>Mg(2+)</name>
        <dbReference type="ChEBI" id="CHEBI:18420"/>
        <label>2</label>
    </ligand>
</feature>
<feature type="binding site" evidence="1">
    <location>
        <position position="512"/>
    </location>
    <ligand>
        <name>Mg(2+)</name>
        <dbReference type="ChEBI" id="CHEBI:18420"/>
        <label>2</label>
    </ligand>
</feature>
<feature type="site" description="Interaction with DNA" evidence="1">
    <location>
        <position position="462"/>
    </location>
</feature>
<feature type="site" description="Interaction with DNA" evidence="1">
    <location>
        <position position="465"/>
    </location>
</feature>
<evidence type="ECO:0000255" key="1">
    <source>
        <dbReference type="HAMAP-Rule" id="MF_01898"/>
    </source>
</evidence>
<organism>
    <name type="scientific">Metamycoplasma arthritidis</name>
    <name type="common">Mycoplasma arthritidis</name>
    <dbReference type="NCBI Taxonomy" id="2111"/>
    <lineage>
        <taxon>Bacteria</taxon>
        <taxon>Bacillati</taxon>
        <taxon>Mycoplasmatota</taxon>
        <taxon>Mycoplasmoidales</taxon>
        <taxon>Metamycoplasmataceae</taxon>
        <taxon>Metamycoplasma</taxon>
    </lineage>
</organism>